<comment type="function">
    <text evidence="1">Binds as a heterodimer with protein bS6 to the central domain of the 16S rRNA, where it helps stabilize the platform of the 30S subunit.</text>
</comment>
<comment type="subunit">
    <text evidence="1">Part of the 30S ribosomal subunit. Forms a tight heterodimer with protein bS6.</text>
</comment>
<comment type="similarity">
    <text evidence="1">Belongs to the bacterial ribosomal protein bS18 family.</text>
</comment>
<protein>
    <recommendedName>
        <fullName evidence="1">Small ribosomal subunit protein bS18</fullName>
    </recommendedName>
    <alternativeName>
        <fullName evidence="2">30S ribosomal protein S18</fullName>
    </alternativeName>
</protein>
<organism>
    <name type="scientific">Haemophilus influenzae (strain 86-028NP)</name>
    <dbReference type="NCBI Taxonomy" id="281310"/>
    <lineage>
        <taxon>Bacteria</taxon>
        <taxon>Pseudomonadati</taxon>
        <taxon>Pseudomonadota</taxon>
        <taxon>Gammaproteobacteria</taxon>
        <taxon>Pasteurellales</taxon>
        <taxon>Pasteurellaceae</taxon>
        <taxon>Haemophilus</taxon>
    </lineage>
</organism>
<dbReference type="EMBL" id="CP000057">
    <property type="protein sequence ID" value="AAX87594.1"/>
    <property type="molecule type" value="Genomic_DNA"/>
</dbReference>
<dbReference type="RefSeq" id="WP_005598105.1">
    <property type="nucleotide sequence ID" value="NC_007146.2"/>
</dbReference>
<dbReference type="SMR" id="Q4QN03"/>
<dbReference type="GeneID" id="93219554"/>
<dbReference type="KEGG" id="hit:NTHI0671"/>
<dbReference type="HOGENOM" id="CLU_148710_2_2_6"/>
<dbReference type="Proteomes" id="UP000002525">
    <property type="component" value="Chromosome"/>
</dbReference>
<dbReference type="GO" id="GO:0022627">
    <property type="term" value="C:cytosolic small ribosomal subunit"/>
    <property type="evidence" value="ECO:0007669"/>
    <property type="project" value="TreeGrafter"/>
</dbReference>
<dbReference type="GO" id="GO:0070181">
    <property type="term" value="F:small ribosomal subunit rRNA binding"/>
    <property type="evidence" value="ECO:0007669"/>
    <property type="project" value="TreeGrafter"/>
</dbReference>
<dbReference type="GO" id="GO:0003735">
    <property type="term" value="F:structural constituent of ribosome"/>
    <property type="evidence" value="ECO:0007669"/>
    <property type="project" value="InterPro"/>
</dbReference>
<dbReference type="GO" id="GO:0006412">
    <property type="term" value="P:translation"/>
    <property type="evidence" value="ECO:0007669"/>
    <property type="project" value="UniProtKB-UniRule"/>
</dbReference>
<dbReference type="FunFam" id="4.10.640.10:FF:000001">
    <property type="entry name" value="30S ribosomal protein S18"/>
    <property type="match status" value="1"/>
</dbReference>
<dbReference type="Gene3D" id="4.10.640.10">
    <property type="entry name" value="Ribosomal protein S18"/>
    <property type="match status" value="1"/>
</dbReference>
<dbReference type="HAMAP" id="MF_00270">
    <property type="entry name" value="Ribosomal_bS18"/>
    <property type="match status" value="1"/>
</dbReference>
<dbReference type="InterPro" id="IPR001648">
    <property type="entry name" value="Ribosomal_bS18"/>
</dbReference>
<dbReference type="InterPro" id="IPR018275">
    <property type="entry name" value="Ribosomal_bS18_CS"/>
</dbReference>
<dbReference type="InterPro" id="IPR036870">
    <property type="entry name" value="Ribosomal_bS18_sf"/>
</dbReference>
<dbReference type="NCBIfam" id="TIGR00165">
    <property type="entry name" value="S18"/>
    <property type="match status" value="1"/>
</dbReference>
<dbReference type="PANTHER" id="PTHR13479">
    <property type="entry name" value="30S RIBOSOMAL PROTEIN S18"/>
    <property type="match status" value="1"/>
</dbReference>
<dbReference type="PANTHER" id="PTHR13479:SF40">
    <property type="entry name" value="SMALL RIBOSOMAL SUBUNIT PROTEIN BS18M"/>
    <property type="match status" value="1"/>
</dbReference>
<dbReference type="Pfam" id="PF01084">
    <property type="entry name" value="Ribosomal_S18"/>
    <property type="match status" value="1"/>
</dbReference>
<dbReference type="PRINTS" id="PR00974">
    <property type="entry name" value="RIBOSOMALS18"/>
</dbReference>
<dbReference type="SUPFAM" id="SSF46911">
    <property type="entry name" value="Ribosomal protein S18"/>
    <property type="match status" value="1"/>
</dbReference>
<dbReference type="PROSITE" id="PS00057">
    <property type="entry name" value="RIBOSOMAL_S18"/>
    <property type="match status" value="1"/>
</dbReference>
<evidence type="ECO:0000255" key="1">
    <source>
        <dbReference type="HAMAP-Rule" id="MF_00270"/>
    </source>
</evidence>
<evidence type="ECO:0000305" key="2"/>
<accession>Q4QN03</accession>
<gene>
    <name evidence="1" type="primary">rpsR</name>
    <name type="ordered locus">NTHI0671</name>
</gene>
<keyword id="KW-0687">Ribonucleoprotein</keyword>
<keyword id="KW-0689">Ribosomal protein</keyword>
<keyword id="KW-0694">RNA-binding</keyword>
<keyword id="KW-0699">rRNA-binding</keyword>
<feature type="chain" id="PRO_1000003502" description="Small ribosomal subunit protein bS18">
    <location>
        <begin position="1"/>
        <end position="75"/>
    </location>
</feature>
<proteinExistence type="inferred from homology"/>
<reference key="1">
    <citation type="journal article" date="2005" name="J. Bacteriol.">
        <title>Genomic sequence of an otitis media isolate of nontypeable Haemophilus influenzae: comparative study with H. influenzae serotype d, strain KW20.</title>
        <authorList>
            <person name="Harrison A."/>
            <person name="Dyer D.W."/>
            <person name="Gillaspy A."/>
            <person name="Ray W.C."/>
            <person name="Mungur R."/>
            <person name="Carson M.B."/>
            <person name="Zhong H."/>
            <person name="Gipson J."/>
            <person name="Gipson M."/>
            <person name="Johnson L.S."/>
            <person name="Lewis L."/>
            <person name="Bakaletz L.O."/>
            <person name="Munson R.S. Jr."/>
        </authorList>
    </citation>
    <scope>NUCLEOTIDE SEQUENCE [LARGE SCALE GENOMIC DNA]</scope>
    <source>
        <strain>86-028NP</strain>
    </source>
</reference>
<name>RS18_HAEI8</name>
<sequence>MARYFRRRKFCRFTAENVVEIDYKDIATLKNYISESGKIVPSRITGTRAKYQRQLARAIKRARYLALLPYTDNHQ</sequence>